<organism>
    <name type="scientific">Shewanella denitrificans (strain OS217 / ATCC BAA-1090 / DSM 15013)</name>
    <dbReference type="NCBI Taxonomy" id="318161"/>
    <lineage>
        <taxon>Bacteria</taxon>
        <taxon>Pseudomonadati</taxon>
        <taxon>Pseudomonadota</taxon>
        <taxon>Gammaproteobacteria</taxon>
        <taxon>Alteromonadales</taxon>
        <taxon>Shewanellaceae</taxon>
        <taxon>Shewanella</taxon>
    </lineage>
</organism>
<keyword id="KW-1185">Reference proteome</keyword>
<comment type="similarity">
    <text evidence="1">Belongs to the UPF0260 family.</text>
</comment>
<protein>
    <recommendedName>
        <fullName evidence="1">UPF0260 protein Sden_1632</fullName>
    </recommendedName>
</protein>
<proteinExistence type="inferred from homology"/>
<name>Y1632_SHEDO</name>
<sequence length="146" mass="16821">MAFWTEKTLAEMTPTEWESLCDGCGKCCLNKLIDDETEELYYTNASCHLLNLETCSCKRYPERFEYVPECTAITVENIASLTWLPDSCAYRRLYLGRTLPSWHPLLTGSKDAMHKAGISVKDKIISEIKVRNIEEHIVLWPLKDID</sequence>
<gene>
    <name type="ordered locus">Sden_1632</name>
</gene>
<dbReference type="EMBL" id="CP000302">
    <property type="protein sequence ID" value="ABE54916.1"/>
    <property type="molecule type" value="Genomic_DNA"/>
</dbReference>
<dbReference type="RefSeq" id="WP_011496074.1">
    <property type="nucleotide sequence ID" value="NC_007954.1"/>
</dbReference>
<dbReference type="SMR" id="Q12NR0"/>
<dbReference type="STRING" id="318161.Sden_1632"/>
<dbReference type="KEGG" id="sdn:Sden_1632"/>
<dbReference type="eggNOG" id="COG2983">
    <property type="taxonomic scope" value="Bacteria"/>
</dbReference>
<dbReference type="HOGENOM" id="CLU_109769_2_0_6"/>
<dbReference type="OrthoDB" id="9786855at2"/>
<dbReference type="Proteomes" id="UP000001982">
    <property type="component" value="Chromosome"/>
</dbReference>
<dbReference type="HAMAP" id="MF_00676">
    <property type="entry name" value="UPF0260"/>
    <property type="match status" value="1"/>
</dbReference>
<dbReference type="InterPro" id="IPR005358">
    <property type="entry name" value="Puta_zinc/iron-chelating_dom"/>
</dbReference>
<dbReference type="InterPro" id="IPR008228">
    <property type="entry name" value="UCP006173"/>
</dbReference>
<dbReference type="NCBIfam" id="NF003500">
    <property type="entry name" value="PRK05170.1-4"/>
    <property type="match status" value="1"/>
</dbReference>
<dbReference type="NCBIfam" id="NF003501">
    <property type="entry name" value="PRK05170.1-5"/>
    <property type="match status" value="1"/>
</dbReference>
<dbReference type="NCBIfam" id="NF003507">
    <property type="entry name" value="PRK05170.2-5"/>
    <property type="match status" value="1"/>
</dbReference>
<dbReference type="PANTHER" id="PTHR37421">
    <property type="entry name" value="UPF0260 PROTEIN YCGN"/>
    <property type="match status" value="1"/>
</dbReference>
<dbReference type="PANTHER" id="PTHR37421:SF1">
    <property type="entry name" value="UPF0260 PROTEIN YCGN"/>
    <property type="match status" value="1"/>
</dbReference>
<dbReference type="Pfam" id="PF03692">
    <property type="entry name" value="CxxCxxCC"/>
    <property type="match status" value="1"/>
</dbReference>
<dbReference type="PIRSF" id="PIRSF006173">
    <property type="entry name" value="UCP006173"/>
    <property type="match status" value="1"/>
</dbReference>
<accession>Q12NR0</accession>
<evidence type="ECO:0000255" key="1">
    <source>
        <dbReference type="HAMAP-Rule" id="MF_00676"/>
    </source>
</evidence>
<feature type="chain" id="PRO_1000044812" description="UPF0260 protein Sden_1632">
    <location>
        <begin position="1"/>
        <end position="146"/>
    </location>
</feature>
<reference key="1">
    <citation type="submission" date="2006-03" db="EMBL/GenBank/DDBJ databases">
        <title>Complete sequence of Shewanella denitrificans OS217.</title>
        <authorList>
            <consortium name="US DOE Joint Genome Institute"/>
            <person name="Copeland A."/>
            <person name="Lucas S."/>
            <person name="Lapidus A."/>
            <person name="Barry K."/>
            <person name="Detter J.C."/>
            <person name="Glavina del Rio T."/>
            <person name="Hammon N."/>
            <person name="Israni S."/>
            <person name="Dalin E."/>
            <person name="Tice H."/>
            <person name="Pitluck S."/>
            <person name="Brettin T."/>
            <person name="Bruce D."/>
            <person name="Han C."/>
            <person name="Tapia R."/>
            <person name="Gilna P."/>
            <person name="Kiss H."/>
            <person name="Schmutz J."/>
            <person name="Larimer F."/>
            <person name="Land M."/>
            <person name="Hauser L."/>
            <person name="Kyrpides N."/>
            <person name="Lykidis A."/>
            <person name="Richardson P."/>
        </authorList>
    </citation>
    <scope>NUCLEOTIDE SEQUENCE [LARGE SCALE GENOMIC DNA]</scope>
    <source>
        <strain>OS217 / ATCC BAA-1090 / DSM 15013</strain>
    </source>
</reference>